<dbReference type="EMBL" id="AB470472">
    <property type="protein sequence ID" value="BAH59425.1"/>
    <property type="molecule type" value="mRNA"/>
</dbReference>
<dbReference type="SMR" id="C4B7M6"/>
<dbReference type="ExpressionAtlas" id="C4B7M6">
    <property type="expression patterns" value="baseline and differential"/>
</dbReference>
<dbReference type="GO" id="GO:0005634">
    <property type="term" value="C:nucleus"/>
    <property type="evidence" value="ECO:0007669"/>
    <property type="project" value="UniProtKB-SubCell"/>
</dbReference>
<dbReference type="GO" id="GO:0043531">
    <property type="term" value="F:ADP binding"/>
    <property type="evidence" value="ECO:0007669"/>
    <property type="project" value="InterPro"/>
</dbReference>
<dbReference type="GO" id="GO:0005524">
    <property type="term" value="F:ATP binding"/>
    <property type="evidence" value="ECO:0007669"/>
    <property type="project" value="UniProtKB-KW"/>
</dbReference>
<dbReference type="GO" id="GO:0003700">
    <property type="term" value="F:DNA-binding transcription factor activity"/>
    <property type="evidence" value="ECO:0007669"/>
    <property type="project" value="InterPro"/>
</dbReference>
<dbReference type="GO" id="GO:0043565">
    <property type="term" value="F:sequence-specific DNA binding"/>
    <property type="evidence" value="ECO:0007669"/>
    <property type="project" value="InterPro"/>
</dbReference>
<dbReference type="GO" id="GO:0006952">
    <property type="term" value="P:defense response"/>
    <property type="evidence" value="ECO:0007669"/>
    <property type="project" value="UniProtKB-KW"/>
</dbReference>
<dbReference type="GO" id="GO:0007165">
    <property type="term" value="P:signal transduction"/>
    <property type="evidence" value="ECO:0007669"/>
    <property type="project" value="InterPro"/>
</dbReference>
<dbReference type="FunFam" id="1.10.8.430:FF:000004">
    <property type="entry name" value="Disease resistance protein (TIR-NBS-LRR class)"/>
    <property type="match status" value="1"/>
</dbReference>
<dbReference type="FunFam" id="3.40.50.10140:FF:000025">
    <property type="entry name" value="Disease resistance protein (TIR-NBS-LRR class)"/>
    <property type="match status" value="1"/>
</dbReference>
<dbReference type="FunFam" id="3.40.50.300:FF:001957">
    <property type="entry name" value="Disease resistance protein (TIR-NBS-LRR class)"/>
    <property type="match status" value="1"/>
</dbReference>
<dbReference type="FunFam" id="3.80.10.10:FF:001177">
    <property type="entry name" value="Disease resistance protein RRS1"/>
    <property type="match status" value="1"/>
</dbReference>
<dbReference type="Gene3D" id="1.10.8.430">
    <property type="entry name" value="Helical domain of apoptotic protease-activating factors"/>
    <property type="match status" value="1"/>
</dbReference>
<dbReference type="Gene3D" id="3.40.50.300">
    <property type="entry name" value="P-loop containing nucleotide triphosphate hydrolases"/>
    <property type="match status" value="1"/>
</dbReference>
<dbReference type="Gene3D" id="3.80.10.10">
    <property type="entry name" value="Ribonuclease Inhibitor"/>
    <property type="match status" value="2"/>
</dbReference>
<dbReference type="Gene3D" id="3.40.50.10140">
    <property type="entry name" value="Toll/interleukin-1 receptor homology (TIR) domain"/>
    <property type="match status" value="1"/>
</dbReference>
<dbReference type="Gene3D" id="2.20.25.80">
    <property type="entry name" value="WRKY domain"/>
    <property type="match status" value="1"/>
</dbReference>
<dbReference type="InterPro" id="IPR042197">
    <property type="entry name" value="Apaf_helical"/>
</dbReference>
<dbReference type="InterPro" id="IPR044974">
    <property type="entry name" value="Disease_R_plants"/>
</dbReference>
<dbReference type="InterPro" id="IPR011713">
    <property type="entry name" value="Leu-rich_rpt_3"/>
</dbReference>
<dbReference type="InterPro" id="IPR032675">
    <property type="entry name" value="LRR_dom_sf"/>
</dbReference>
<dbReference type="InterPro" id="IPR002182">
    <property type="entry name" value="NB-ARC"/>
</dbReference>
<dbReference type="InterPro" id="IPR027417">
    <property type="entry name" value="P-loop_NTPase"/>
</dbReference>
<dbReference type="InterPro" id="IPR000157">
    <property type="entry name" value="TIR_dom"/>
</dbReference>
<dbReference type="InterPro" id="IPR035897">
    <property type="entry name" value="Toll_tir_struct_dom_sf"/>
</dbReference>
<dbReference type="InterPro" id="IPR036390">
    <property type="entry name" value="WH_DNA-bd_sf"/>
</dbReference>
<dbReference type="InterPro" id="IPR003657">
    <property type="entry name" value="WRKY_dom"/>
</dbReference>
<dbReference type="InterPro" id="IPR036576">
    <property type="entry name" value="WRKY_dom_sf"/>
</dbReference>
<dbReference type="PANTHER" id="PTHR11017:SF569">
    <property type="entry name" value="DISEASE RESISTANCE PROTEIN"/>
    <property type="match status" value="1"/>
</dbReference>
<dbReference type="PANTHER" id="PTHR11017">
    <property type="entry name" value="LEUCINE-RICH REPEAT-CONTAINING PROTEIN"/>
    <property type="match status" value="1"/>
</dbReference>
<dbReference type="Pfam" id="PF07725">
    <property type="entry name" value="LRR_3"/>
    <property type="match status" value="1"/>
</dbReference>
<dbReference type="Pfam" id="PF00931">
    <property type="entry name" value="NB-ARC"/>
    <property type="match status" value="1"/>
</dbReference>
<dbReference type="Pfam" id="PF23282">
    <property type="entry name" value="WHD_ROQ1"/>
    <property type="match status" value="2"/>
</dbReference>
<dbReference type="Pfam" id="PF03106">
    <property type="entry name" value="WRKY"/>
    <property type="match status" value="1"/>
</dbReference>
<dbReference type="PRINTS" id="PR00364">
    <property type="entry name" value="DISEASERSIST"/>
</dbReference>
<dbReference type="SMART" id="SM00774">
    <property type="entry name" value="WRKY"/>
    <property type="match status" value="1"/>
</dbReference>
<dbReference type="SUPFAM" id="SSF52058">
    <property type="entry name" value="L domain-like"/>
    <property type="match status" value="1"/>
</dbReference>
<dbReference type="SUPFAM" id="SSF52540">
    <property type="entry name" value="P-loop containing nucleoside triphosphate hydrolases"/>
    <property type="match status" value="1"/>
</dbReference>
<dbReference type="SUPFAM" id="SSF52200">
    <property type="entry name" value="Toll/Interleukin receptor TIR domain"/>
    <property type="match status" value="1"/>
</dbReference>
<dbReference type="SUPFAM" id="SSF46785">
    <property type="entry name" value="Winged helix' DNA-binding domain"/>
    <property type="match status" value="1"/>
</dbReference>
<dbReference type="SUPFAM" id="SSF118290">
    <property type="entry name" value="WRKY DNA-binding domain"/>
    <property type="match status" value="1"/>
</dbReference>
<dbReference type="PROSITE" id="PS50104">
    <property type="entry name" value="TIR"/>
    <property type="match status" value="1"/>
</dbReference>
<dbReference type="PROSITE" id="PS50811">
    <property type="entry name" value="WRKY"/>
    <property type="match status" value="1"/>
</dbReference>
<gene>
    <name evidence="8" type="primary">RRS1</name>
    <name type="synonym">RCH2</name>
    <name type="synonym">WRKY52</name>
</gene>
<organism evidence="10">
    <name type="scientific">Arabidopsis thaliana</name>
    <name type="common">Mouse-ear cress</name>
    <dbReference type="NCBI Taxonomy" id="3702"/>
    <lineage>
        <taxon>Eukaryota</taxon>
        <taxon>Viridiplantae</taxon>
        <taxon>Streptophyta</taxon>
        <taxon>Embryophyta</taxon>
        <taxon>Tracheophyta</taxon>
        <taxon>Spermatophyta</taxon>
        <taxon>Magnoliopsida</taxon>
        <taxon>eudicotyledons</taxon>
        <taxon>Gunneridae</taxon>
        <taxon>Pentapetalae</taxon>
        <taxon>rosids</taxon>
        <taxon>malvids</taxon>
        <taxon>Brassicales</taxon>
        <taxon>Brassicaceae</taxon>
        <taxon>Camelineae</taxon>
        <taxon>Arabidopsis</taxon>
    </lineage>
</organism>
<evidence type="ECO:0000250" key="1">
    <source>
        <dbReference type="UniProtKB" id="P0DKH5"/>
    </source>
</evidence>
<evidence type="ECO:0000255" key="2"/>
<evidence type="ECO:0000255" key="3">
    <source>
        <dbReference type="PROSITE-ProRule" id="PRU00204"/>
    </source>
</evidence>
<evidence type="ECO:0000255" key="4">
    <source>
        <dbReference type="PROSITE-ProRule" id="PRU00223"/>
    </source>
</evidence>
<evidence type="ECO:0000255" key="5">
    <source>
        <dbReference type="PROSITE-ProRule" id="PRU00499"/>
    </source>
</evidence>
<evidence type="ECO:0000256" key="6">
    <source>
        <dbReference type="SAM" id="MobiDB-lite"/>
    </source>
</evidence>
<evidence type="ECO:0000269" key="7">
    <source>
    </source>
</evidence>
<evidence type="ECO:0000303" key="8">
    <source>
    </source>
</evidence>
<evidence type="ECO:0000305" key="9"/>
<evidence type="ECO:0000312" key="10">
    <source>
        <dbReference type="EMBL" id="BAH59425.1"/>
    </source>
</evidence>
<proteinExistence type="evidence at transcript level"/>
<protein>
    <recommendedName>
        <fullName evidence="8">Disease resistance protein RRS1</fullName>
    </recommendedName>
    <alternativeName>
        <fullName evidence="8">Disease resistance protein RCH2</fullName>
    </alternativeName>
    <alternativeName>
        <fullName>Probable WRKY transcription factor 52</fullName>
    </alternativeName>
    <alternativeName>
        <fullName evidence="8">Resistance to Colletotrichum higginsianum 2 protein</fullName>
    </alternativeName>
    <alternativeName>
        <fullName evidence="8">Resistance to Ralstonia solanacearum 1 protein</fullName>
    </alternativeName>
</protein>
<name>WR52R_ARATH</name>
<sequence length="1373" mass="155346">MTNCEKDEEFVCISCVEEVRYSFVSHLSEALRRKGINNVVVDVDIDDLLFKESQAKIEKAGVSVMVLPGNCDPSEVWLDKFAKVLECQRNNKDQAVVSVLYGDSLLRDQWLSELDFRGLSRIHQSRKECSDSILVEEIVRDVYETHFYVGRIGIYSKLLEIENMVNKQPIGIRCVGIWGMPGIGKTTLAKAVFDQMSSAFDASCFIEDYDKSIHEKGLYCLLEEQLLPGNDATIMKLNSLRDRLNSKRVLVVLDDVCNALVAESFLEGFDWLGPGSLIIITSRDKQVFRLCGINQIYEVQGLNEKEARQLFLLSASIKEDMGEQNLHELSVRVISYANGNPLAISVYGRELKGKKKLSEMETAFLKLKRRPPFKIVDAFKSSYDTLSDNEKNIFLDIACFFQGENVNYVIQLLEGCGFFPHVEIDVLVDKCLVTISENRVWLHKLTQDIGREIINGETVQIERRRRLWEPWSIKYLLEYNEHKANGEPKTTFKRAQGSEEIEGLFLDTSNLRFDLQPSAFKNMLNLRLLKIYCSNPEVHPVINFPTGSLHSLPNELRLLHWENYPLKSLPQNFDPRHLVEINMPYSQLQKLWGGTKNLEMLRTIRLCHSQHLVDIDDLLKAENLEVIDLQGCTRLQNFPAAGRLLRLRVVNLSGCIKIKSVLEIPPNIEKLHLQGTGILALPVSTVKPNHRELVNFLTEIPGLSEASKLERLTSLLESNSSCQDLGKLICLELKDCSCLQSLPNMANLDLNVLDLSGCSSLNSIQGFPRFLKQLYLGGTAIREVPQLPQSLEILNAHGSCLRSLPNMANLEFLKVLDLSGCSELETIQGFPRNLKELYFAGTTLREVPQLPLSLEVLNAHGSDSEKLPMHYKFNNFFDLSQQVVNDFFLKALTYVKHIPRGYTQELINKAPTFSFSAPSHTNQNATFDLQPGSSVMTRLNHSWRNTLVGFGMLVEVAFPEDYCDATDVGISCVCRWSNKEGRSCRIERNFHCWAPGKVVPKVRKDHTFVFSDVNMRPSTGEGNDPDIWAGLVVFEFFPINQQTKCLNDRFTVTRCGVRVINVATGNTSLENISLVLSLDPVEVSGYEVLRVSYDDLQEMDKVLFLYIASLFNDEDVDFVAPLIAGIDLDVSSGLKVLADVSLISVSSNGEIVMHSLQRQMGKEILHGQSMLLSDCESSMTENLSDVPKKEKKHRESKVKKVVSIPAIDEGDLWTWRKYGQKDILGSRFPRGYYRCAYKFTHGCKATKQVQRSETDSNMLAITYLSEHNHPRPTKRKALADSTRSTSSSICSAITTSASSRVFQNKDEPNKPHLPSSSTPPGNAAVLFKMTDMEEFQDNMEVDNDVVDTRTLALFPEFQHQPEEEYPWSTFFDD</sequence>
<keyword id="KW-0067">ATP-binding</keyword>
<keyword id="KW-0238">DNA-binding</keyword>
<keyword id="KW-0433">Leucine-rich repeat</keyword>
<keyword id="KW-0547">Nucleotide-binding</keyword>
<keyword id="KW-0539">Nucleus</keyword>
<keyword id="KW-0611">Plant defense</keyword>
<keyword id="KW-0677">Repeat</keyword>
<keyword id="KW-0804">Transcription</keyword>
<keyword id="KW-0805">Transcription regulation</keyword>
<reference key="1">
    <citation type="journal article" date="2009" name="Plant J.">
        <title>RRS1 and RPS4 provide a dual Resistance-gene system against fungal and bacterial pathogens.</title>
        <authorList>
            <person name="Narusaka M."/>
            <person name="Shirasu K."/>
            <person name="Noutoshi Y."/>
            <person name="Kubo Y."/>
            <person name="Shiraishi T."/>
            <person name="Iwabuchi M."/>
            <person name="Narusaka Y."/>
        </authorList>
    </citation>
    <scope>NUCLEOTIDE SEQUENCE [MRNA]</scope>
    <scope>FUNCTION</scope>
    <source>
        <strain>cv. RLD</strain>
    </source>
</reference>
<comment type="function">
    <text evidence="1 7 9">Transcription factor. Interacts specifically with the W box (5'-(T)TGAC[CT]-3'), a frequently occurring elicitor-responsive cis-acting element. Also acts as a disease resistance protein involved in resistance to fungal and bacterial pathogens, including R.solanacearum, P.syringae pv. tomato and C.higginsianum.</text>
</comment>
<comment type="subunit">
    <text evidence="1">Interacts with PopP2, a R.solanacearum type III effector.</text>
</comment>
<comment type="subcellular location">
    <subcellularLocation>
        <location evidence="4">Nucleus</location>
    </subcellularLocation>
</comment>
<comment type="miscellaneous">
    <text evidence="7">Ecotypes susceptible to C.higginsianum or R.solanacearum, such as cv. Columbia, contain a protein with a premature stop codon while the longer allele found in cv. Nd-1, cv. Wassilewskija or cv. RLD confers resistance.</text>
</comment>
<accession>C4B7M6</accession>
<feature type="chain" id="PRO_0000431362" description="Disease resistance protein RRS1">
    <location>
        <begin position="1"/>
        <end position="1373"/>
    </location>
</feature>
<feature type="domain" description="TIR" evidence="3">
    <location>
        <begin position="5"/>
        <end position="146"/>
    </location>
</feature>
<feature type="domain" description="NB-ARC" evidence="2">
    <location>
        <begin position="170"/>
        <end position="421"/>
    </location>
</feature>
<feature type="repeat" description="LRR 1" evidence="2">
    <location>
        <begin position="498"/>
        <end position="522"/>
    </location>
</feature>
<feature type="repeat" description="LRR 2" evidence="2">
    <location>
        <begin position="535"/>
        <end position="553"/>
    </location>
</feature>
<feature type="repeat" description="LRR 3" evidence="2">
    <location>
        <begin position="554"/>
        <end position="575"/>
    </location>
</feature>
<feature type="repeat" description="LRR 4" evidence="2">
    <location>
        <begin position="577"/>
        <end position="598"/>
    </location>
</feature>
<feature type="repeat" description="LRR 5" evidence="2">
    <location>
        <begin position="621"/>
        <end position="646"/>
    </location>
</feature>
<feature type="repeat" description="LRR 6" evidence="2">
    <location>
        <begin position="665"/>
        <end position="688"/>
    </location>
</feature>
<feature type="repeat" description="LRR 7" evidence="2">
    <location>
        <begin position="742"/>
        <end position="766"/>
    </location>
</feature>
<feature type="repeat" description="LRR 8" evidence="2">
    <location>
        <begin position="768"/>
        <end position="793"/>
    </location>
</feature>
<feature type="repeat" description="LRR 9" evidence="2">
    <location>
        <begin position="831"/>
        <end position="854"/>
    </location>
</feature>
<feature type="DNA-binding region" description="WRKY" evidence="4">
    <location>
        <begin position="1204"/>
        <end position="1272"/>
    </location>
</feature>
<feature type="region of interest" description="Disordered" evidence="6">
    <location>
        <begin position="1300"/>
        <end position="1323"/>
    </location>
</feature>
<feature type="short sequence motif" description="Nuclear localization signal" evidence="2">
    <location>
        <begin position="988"/>
        <end position="1005"/>
    </location>
</feature>
<feature type="binding site" evidence="5">
    <location>
        <begin position="179"/>
        <end position="186"/>
    </location>
    <ligand>
        <name>ATP</name>
        <dbReference type="ChEBI" id="CHEBI:30616"/>
    </ligand>
</feature>